<accession>Q0B9S2</accession>
<organism>
    <name type="scientific">Burkholderia ambifaria (strain ATCC BAA-244 / DSM 16087 / CCUG 44356 / LMG 19182 / AMMD)</name>
    <name type="common">Burkholderia cepacia (strain AMMD)</name>
    <dbReference type="NCBI Taxonomy" id="339670"/>
    <lineage>
        <taxon>Bacteria</taxon>
        <taxon>Pseudomonadati</taxon>
        <taxon>Pseudomonadota</taxon>
        <taxon>Betaproteobacteria</taxon>
        <taxon>Burkholderiales</taxon>
        <taxon>Burkholderiaceae</taxon>
        <taxon>Burkholderia</taxon>
        <taxon>Burkholderia cepacia complex</taxon>
    </lineage>
</organism>
<dbReference type="EC" id="1.5.1.49" evidence="2"/>
<dbReference type="EMBL" id="CP000441">
    <property type="protein sequence ID" value="ABI89101.1"/>
    <property type="molecule type" value="Genomic_DNA"/>
</dbReference>
<dbReference type="RefSeq" id="WP_011658570.1">
    <property type="nucleotide sequence ID" value="NC_008391.1"/>
</dbReference>
<dbReference type="SMR" id="Q0B9S2"/>
<dbReference type="GeneID" id="93086545"/>
<dbReference type="KEGG" id="bam:Bamb_3547"/>
<dbReference type="PATRIC" id="fig|339670.21.peg.3770"/>
<dbReference type="eggNOG" id="COG2055">
    <property type="taxonomic scope" value="Bacteria"/>
</dbReference>
<dbReference type="SABIO-RK" id="Q0B9S2"/>
<dbReference type="Proteomes" id="UP000000662">
    <property type="component" value="Chromosome 2"/>
</dbReference>
<dbReference type="GO" id="GO:0016491">
    <property type="term" value="F:oxidoreductase activity"/>
    <property type="evidence" value="ECO:0007669"/>
    <property type="project" value="UniProtKB-KW"/>
</dbReference>
<dbReference type="Gene3D" id="1.10.1530.10">
    <property type="match status" value="1"/>
</dbReference>
<dbReference type="Gene3D" id="3.30.1370.60">
    <property type="entry name" value="Hypothetical oxidoreductase yiak, domain 2"/>
    <property type="match status" value="1"/>
</dbReference>
<dbReference type="InterPro" id="IPR043144">
    <property type="entry name" value="Mal/L-sulf/L-lact_DH-like_ah"/>
</dbReference>
<dbReference type="InterPro" id="IPR043143">
    <property type="entry name" value="Mal/L-sulf/L-lact_DH-like_NADP"/>
</dbReference>
<dbReference type="InterPro" id="IPR036111">
    <property type="entry name" value="Mal/L-sulfo/L-lacto_DH-like_sf"/>
</dbReference>
<dbReference type="InterPro" id="IPR003767">
    <property type="entry name" value="Malate/L-lactate_DH-like"/>
</dbReference>
<dbReference type="PANTHER" id="PTHR11091:SF0">
    <property type="entry name" value="MALATE DEHYDROGENASE"/>
    <property type="match status" value="1"/>
</dbReference>
<dbReference type="PANTHER" id="PTHR11091">
    <property type="entry name" value="OXIDOREDUCTASE-RELATED"/>
    <property type="match status" value="1"/>
</dbReference>
<dbReference type="Pfam" id="PF02615">
    <property type="entry name" value="Ldh_2"/>
    <property type="match status" value="1"/>
</dbReference>
<dbReference type="SUPFAM" id="SSF89733">
    <property type="entry name" value="L-sulfolactate dehydrogenase-like"/>
    <property type="match status" value="1"/>
</dbReference>
<evidence type="ECO:0000250" key="1">
    <source>
        <dbReference type="UniProtKB" id="Q4U331"/>
    </source>
</evidence>
<evidence type="ECO:0000269" key="2">
    <source>
    </source>
</evidence>
<evidence type="ECO:0000303" key="3">
    <source>
    </source>
</evidence>
<evidence type="ECO:0000305" key="4"/>
<evidence type="ECO:0000312" key="5">
    <source>
        <dbReference type="EMBL" id="ABI89101.1"/>
    </source>
</evidence>
<gene>
    <name evidence="5" type="ordered locus">Bamb_3547</name>
</gene>
<sequence length="340" mass="36239">MSESLAEVVLSLDEVHALALRVLTHNGMSAAHAQAIANVITQGQRDECHSHGVYRLLVCVRSLKKGKVDPQAVPTLRRLSSSIVAVDAHRGFSLLSFETGLPVLVEMAKQHGIAAMAINHCYHFSALWPEVEAIAAEGLVGIAMNPSHSWVAPEGGREPVFGTNPIAFAWPRPDGVPFVFDFATSAIARGDIELHAKQGKAIPPHWAIDADGQPTTDPKAALQGAMRTFGGHKGSALAAMVELLGGALIGDMTSRESMAFDEGVGATPCHGELVIAFDPKVFLGDELDAGLARGERMFASITGQGARLPSQRRFDARARSIAHGVRIPKALYDEILTLLD</sequence>
<comment type="function">
    <text evidence="2">Catalyzes the reduction of Delta(1)-pyrroline-2-carboxylate (Pyr2C) to L-proline, using NADPH as the electron donor. May be involved in a degradation pathway that converts trans-3-hydroxy-L-proline (t3LHyp) to L-proline.</text>
</comment>
<comment type="catalytic activity">
    <reaction evidence="2">
        <text>L-proline + NAD(+) = 1-pyrroline-2-carboxylate + NADH + H(+)</text>
        <dbReference type="Rhea" id="RHEA:20321"/>
        <dbReference type="ChEBI" id="CHEBI:15378"/>
        <dbReference type="ChEBI" id="CHEBI:39785"/>
        <dbReference type="ChEBI" id="CHEBI:57540"/>
        <dbReference type="ChEBI" id="CHEBI:57945"/>
        <dbReference type="ChEBI" id="CHEBI:60039"/>
        <dbReference type="EC" id="1.5.1.49"/>
    </reaction>
</comment>
<comment type="catalytic activity">
    <reaction evidence="2">
        <text>L-proline + NADP(+) = 1-pyrroline-2-carboxylate + NADPH + H(+)</text>
        <dbReference type="Rhea" id="RHEA:20317"/>
        <dbReference type="ChEBI" id="CHEBI:15378"/>
        <dbReference type="ChEBI" id="CHEBI:39785"/>
        <dbReference type="ChEBI" id="CHEBI:57783"/>
        <dbReference type="ChEBI" id="CHEBI:58349"/>
        <dbReference type="ChEBI" id="CHEBI:60039"/>
        <dbReference type="EC" id="1.5.1.49"/>
    </reaction>
</comment>
<comment type="biophysicochemical properties">
    <kinetics>
        <KM evidence="2">9.4 mM for Delta(1)-pyrroline-2-carboxylate (using NADPH as cosubstrate)</KM>
        <text evidence="2">kcat is 54 sec(-1) for Pyr2C reduction using NADPH.</text>
    </kinetics>
</comment>
<comment type="subunit">
    <text evidence="1">Homodimer.</text>
</comment>
<comment type="similarity">
    <text evidence="4">Belongs to the LDH2/MDH2 oxidoreductase family.</text>
</comment>
<protein>
    <recommendedName>
        <fullName>Delta(1)-pyrroline-2-carboxylate reductase 1</fullName>
        <shortName>Pyr2C reductase 1</shortName>
        <ecNumber evidence="2">1.5.1.49</ecNumber>
    </recommendedName>
    <alternativeName>
        <fullName evidence="3">Proline ketimine reductase 1</fullName>
    </alternativeName>
</protein>
<keyword id="KW-0521">NADP</keyword>
<keyword id="KW-0560">Oxidoreductase</keyword>
<name>PYCR1_BURCM</name>
<reference key="1">
    <citation type="submission" date="2006-08" db="EMBL/GenBank/DDBJ databases">
        <title>Complete sequence of chromosome 2 of Burkholderia cepacia AMMD.</title>
        <authorList>
            <person name="Copeland A."/>
            <person name="Lucas S."/>
            <person name="Lapidus A."/>
            <person name="Barry K."/>
            <person name="Detter J.C."/>
            <person name="Glavina del Rio T."/>
            <person name="Hammon N."/>
            <person name="Israni S."/>
            <person name="Pitluck S."/>
            <person name="Bruce D."/>
            <person name="Chain P."/>
            <person name="Malfatti S."/>
            <person name="Shin M."/>
            <person name="Vergez L."/>
            <person name="Schmutz J."/>
            <person name="Larimer F."/>
            <person name="Land M."/>
            <person name="Hauser L."/>
            <person name="Kyrpides N."/>
            <person name="Kim E."/>
            <person name="Parke J."/>
            <person name="Coenye T."/>
            <person name="Konstantinidis K."/>
            <person name="Ramette A."/>
            <person name="Tiedje J."/>
            <person name="Richardson P."/>
        </authorList>
    </citation>
    <scope>NUCLEOTIDE SEQUENCE [LARGE SCALE GENOMIC DNA]</scope>
    <source>
        <strain>ATCC BAA-244 / DSM 16087 / CCUG 44356 / LMG 19182 / AMMD</strain>
    </source>
</reference>
<reference key="2">
    <citation type="journal article" date="2014" name="Elife">
        <title>Prediction and characterization of enzymatic activities guided by sequence similarity and genome neighborhood networks.</title>
        <authorList>
            <person name="Zhao S."/>
            <person name="Sakai A."/>
            <person name="Zhang X."/>
            <person name="Vetting M.W."/>
            <person name="Kumar R."/>
            <person name="Hillerich B."/>
            <person name="San Francisco B."/>
            <person name="Solbiati J."/>
            <person name="Steves A."/>
            <person name="Brown S."/>
            <person name="Akiva E."/>
            <person name="Barber A."/>
            <person name="Seidel R.D."/>
            <person name="Babbitt P.C."/>
            <person name="Almo S.C."/>
            <person name="Gerlt J.A."/>
            <person name="Jacobson M.P."/>
        </authorList>
    </citation>
    <scope>FUNCTION</scope>
    <scope>CATALYTIC ACTIVITY</scope>
    <scope>BIOPHYSICOCHEMICAL PROPERTIES</scope>
</reference>
<feature type="chain" id="PRO_0000432293" description="Delta(1)-pyrroline-2-carboxylate reductase 1">
    <location>
        <begin position="1"/>
        <end position="340"/>
    </location>
</feature>
<feature type="active site" description="Charge relay system" evidence="1">
    <location>
        <position position="50"/>
    </location>
</feature>
<feature type="active site" description="Proton donor" evidence="1">
    <location>
        <position position="51"/>
    </location>
</feature>
<feature type="active site" description="Charge relay system" evidence="1">
    <location>
        <position position="191"/>
    </location>
</feature>
<feature type="binding site" evidence="1">
    <location>
        <position position="55"/>
    </location>
    <ligand>
        <name>substrate</name>
    </ligand>
</feature>
<feature type="binding site" description="in other chain" evidence="1">
    <location>
        <begin position="123"/>
        <end position="127"/>
    </location>
    <ligand>
        <name>NADP(+)</name>
        <dbReference type="ChEBI" id="CHEBI:58349"/>
        <note>ligand shared between dimeric partners</note>
    </ligand>
</feature>
<feature type="binding site" evidence="1">
    <location>
        <position position="163"/>
    </location>
    <ligand>
        <name>substrate</name>
    </ligand>
</feature>
<feature type="binding site" description="in other chain" evidence="1">
    <location>
        <begin position="181"/>
        <end position="183"/>
    </location>
    <ligand>
        <name>NADP(+)</name>
        <dbReference type="ChEBI" id="CHEBI:58349"/>
        <note>ligand shared between dimeric partners</note>
    </ligand>
</feature>
<feature type="binding site" evidence="1">
    <location>
        <begin position="189"/>
        <end position="190"/>
    </location>
    <ligand>
        <name>substrate</name>
    </ligand>
</feature>
<feature type="binding site" evidence="1">
    <location>
        <begin position="232"/>
        <end position="233"/>
    </location>
    <ligand>
        <name>NADP(+)</name>
        <dbReference type="ChEBI" id="CHEBI:58349"/>
        <note>ligand shared between dimeric partners</note>
    </ligand>
</feature>
<feature type="binding site" description="in other chain" evidence="1">
    <location>
        <begin position="307"/>
        <end position="313"/>
    </location>
    <ligand>
        <name>NADP(+)</name>
        <dbReference type="ChEBI" id="CHEBI:58349"/>
        <note>ligand shared between dimeric partners</note>
    </ligand>
</feature>
<proteinExistence type="evidence at protein level"/>